<accession>Q2YRB4</accession>
<reference key="1">
    <citation type="journal article" date="2005" name="Infect. Immun.">
        <title>Whole-genome analyses of speciation events in pathogenic Brucellae.</title>
        <authorList>
            <person name="Chain P.S."/>
            <person name="Comerci D.J."/>
            <person name="Tolmasky M.E."/>
            <person name="Larimer F.W."/>
            <person name="Malfatti S.A."/>
            <person name="Vergez L.M."/>
            <person name="Aguero F."/>
            <person name="Land M.L."/>
            <person name="Ugalde R.A."/>
            <person name="Garcia E."/>
        </authorList>
    </citation>
    <scope>NUCLEOTIDE SEQUENCE [LARGE SCALE GENOMIC DNA]</scope>
    <source>
        <strain>2308</strain>
    </source>
</reference>
<feature type="chain" id="PRO_0000361899" description="Cell-division control histidine kinase PdhS">
    <location>
        <begin position="1"/>
        <end position="1035"/>
    </location>
</feature>
<feature type="domain" description="PAS" evidence="3">
    <location>
        <begin position="659"/>
        <end position="730"/>
    </location>
</feature>
<feature type="domain" description="Histidine kinase" evidence="2">
    <location>
        <begin position="802"/>
        <end position="1031"/>
    </location>
</feature>
<feature type="region of interest" description="Important for polar localization" evidence="1">
    <location>
        <begin position="1"/>
        <end position="613"/>
    </location>
</feature>
<feature type="region of interest" description="Disordered" evidence="4">
    <location>
        <begin position="500"/>
        <end position="533"/>
    </location>
</feature>
<feature type="region of interest" description="Interaction with DivK" evidence="1">
    <location>
        <begin position="614"/>
        <end position="1035"/>
    </location>
</feature>
<feature type="modified residue" description="Phosphohistidine; by autocatalysis" evidence="2">
    <location>
        <position position="805"/>
    </location>
</feature>
<evidence type="ECO:0000250" key="1"/>
<evidence type="ECO:0000255" key="2">
    <source>
        <dbReference type="PROSITE-ProRule" id="PRU00107"/>
    </source>
</evidence>
<evidence type="ECO:0000255" key="3">
    <source>
        <dbReference type="PROSITE-ProRule" id="PRU00140"/>
    </source>
</evidence>
<evidence type="ECO:0000256" key="4">
    <source>
        <dbReference type="SAM" id="MobiDB-lite"/>
    </source>
</evidence>
<sequence length="1035" mass="111804">MSGSYPFIDIAALDSVREGFARGDAQLVLAHDLSTVLWVNGPGAKLFGYNRVEDLIEGQLDLPVATRRQIAAFSSENTSAPSAVAVRLGGGLRSELTHLHVSNIKLPDGVAALLVATQMPDNSAEAAISGLGDDSTHIALVDAVGKVVAASPRFALLDISASTLEDLIVEAGDATDRIVKRRIRTGSHSVPGAIARLTDTPALHLLCIVGDAPAQFQTAAEAVPLPDNAEAVLEEILPEQGDAPAQQAQKTHAEQPRPKTFAFDHDAPPARFIWKVGPDGTFSEISPNLAAVVGPNSADIVGRRFSDVANVFGFDTDGSIAALLLERDTWSGKRLLWPVEGTRLRVPVELAALPVYSRDREFLGFRGFGIVRPAEAEADPEEIGLALAGGIPQNRKPRKEPAETARMVGEDDVLALSEEVANDDQPAAVLPKPPLDITPTPGRRDSDKVISLLNSCAQEKVAADQAKFLKEKERATRPEGGLTKTERNAFREIAERLRKQGLANTRAESETPVSETSSIEPVEPTPPVKTRSEPIQPDETALLANLPVPVIIHSGDAIHYVNQALLDITGYESLDDIRSAGGVDVLFNSESDDGETRQSMLLRHADGSEEPVDAHLNAIAWRGGRALMLSLMPVTAADLPAPAELPAANDEEKQALEAHVEELKTILDTATDGVVLIDPEGRIRSMNHSASALFGYERDEAEGKFFSMLFAIESQRAAMDYLHGLSGNGVLSVLNDGREVIGREAKGGFIPLFMTIGKLPHTRGFCAVLRDITQWKRTEEELTNARKEAERASNQKTEFLARISHEIRTPLNAIIGFSELMADEKFGPIGNDRYRDYLRDINRSGNHVLALVNDLLDISKIEAGALDMQFEAVSLNDAIGEAIALMQPQANRERVIIRSSFQSNLPDIVADSRSIKQVALNLLSNAVRFTAPGGQVIVSTSYELNGDVVMRVRDTGIGMSKSEVEQALKPFRQINALERRKAESAKDWRNEGTGLGLPLTKAMVEANRAQFAIDSNPGQGTVVEIVFPPTRVLAD</sequence>
<protein>
    <recommendedName>
        <fullName>Cell-division control histidine kinase PdhS</fullName>
        <ecNumber>2.7.13.3</ecNumber>
    </recommendedName>
</protein>
<comment type="function">
    <text evidence="1">Functions as a polar differentiation marker. Essential protein that, by localizing in the old pole of dividing cells, controls cell division and maturation, probably through control of DivK phosphorylation status and cellular distribution, which in turn regulates CtrA, a transcriptional regulator of the minB operon. The asymmetrical localization of this protein is probably required for cells to enter a new division cycle (By similarity).</text>
</comment>
<comment type="catalytic activity">
    <reaction>
        <text>ATP + protein L-histidine = ADP + protein N-phospho-L-histidine.</text>
        <dbReference type="EC" id="2.7.13.3"/>
    </reaction>
</comment>
<comment type="subunit">
    <text evidence="1">Interacts with DivK.</text>
</comment>
<comment type="subcellular location">
    <subcellularLocation>
        <location evidence="1">Cytoplasm</location>
    </subcellularLocation>
    <text evidence="1">Localizes at the old pole of dividing cells. Colocalizes with DivK (By similarity).</text>
</comment>
<organism>
    <name type="scientific">Brucella abortus (strain 2308)</name>
    <dbReference type="NCBI Taxonomy" id="359391"/>
    <lineage>
        <taxon>Bacteria</taxon>
        <taxon>Pseudomonadati</taxon>
        <taxon>Pseudomonadota</taxon>
        <taxon>Alphaproteobacteria</taxon>
        <taxon>Hyphomicrobiales</taxon>
        <taxon>Brucellaceae</taxon>
        <taxon>Brucella/Ochrobactrum group</taxon>
        <taxon>Brucella</taxon>
    </lineage>
</organism>
<proteinExistence type="inferred from homology"/>
<gene>
    <name type="primary">pdhS</name>
    <name type="ordered locus">BAB1_1621</name>
</gene>
<dbReference type="EC" id="2.7.13.3"/>
<dbReference type="EMBL" id="AM040264">
    <property type="protein sequence ID" value="CAJ11577.1"/>
    <property type="molecule type" value="Genomic_DNA"/>
</dbReference>
<dbReference type="RefSeq" id="WP_002966929.1">
    <property type="nucleotide sequence ID" value="NZ_KN046823.1"/>
</dbReference>
<dbReference type="SMR" id="Q2YRB4"/>
<dbReference type="IntAct" id="Q2YRB4">
    <property type="interactions" value="4"/>
</dbReference>
<dbReference type="STRING" id="359391.BAB1_1621"/>
<dbReference type="GeneID" id="93016129"/>
<dbReference type="KEGG" id="bmf:BAB1_1621"/>
<dbReference type="PATRIC" id="fig|359391.11.peg.1070"/>
<dbReference type="HOGENOM" id="CLU_000445_23_0_5"/>
<dbReference type="PhylomeDB" id="Q2YRB4"/>
<dbReference type="Proteomes" id="UP000002719">
    <property type="component" value="Chromosome I"/>
</dbReference>
<dbReference type="GO" id="GO:0005737">
    <property type="term" value="C:cytoplasm"/>
    <property type="evidence" value="ECO:0007669"/>
    <property type="project" value="UniProtKB-SubCell"/>
</dbReference>
<dbReference type="GO" id="GO:0005886">
    <property type="term" value="C:plasma membrane"/>
    <property type="evidence" value="ECO:0007669"/>
    <property type="project" value="TreeGrafter"/>
</dbReference>
<dbReference type="GO" id="GO:0005524">
    <property type="term" value="F:ATP binding"/>
    <property type="evidence" value="ECO:0007669"/>
    <property type="project" value="UniProtKB-KW"/>
</dbReference>
<dbReference type="GO" id="GO:0009927">
    <property type="term" value="F:histidine phosphotransfer kinase activity"/>
    <property type="evidence" value="ECO:0007669"/>
    <property type="project" value="TreeGrafter"/>
</dbReference>
<dbReference type="GO" id="GO:0000155">
    <property type="term" value="F:phosphorelay sensor kinase activity"/>
    <property type="evidence" value="ECO:0007669"/>
    <property type="project" value="InterPro"/>
</dbReference>
<dbReference type="GO" id="GO:0051301">
    <property type="term" value="P:cell division"/>
    <property type="evidence" value="ECO:0007669"/>
    <property type="project" value="UniProtKB-KW"/>
</dbReference>
<dbReference type="GO" id="GO:0006355">
    <property type="term" value="P:regulation of DNA-templated transcription"/>
    <property type="evidence" value="ECO:0007669"/>
    <property type="project" value="InterPro"/>
</dbReference>
<dbReference type="CDD" id="cd00082">
    <property type="entry name" value="HisKA"/>
    <property type="match status" value="1"/>
</dbReference>
<dbReference type="CDD" id="cd00130">
    <property type="entry name" value="PAS"/>
    <property type="match status" value="1"/>
</dbReference>
<dbReference type="Gene3D" id="1.10.287.130">
    <property type="match status" value="1"/>
</dbReference>
<dbReference type="Gene3D" id="3.30.565.10">
    <property type="entry name" value="Histidine kinase-like ATPase, C-terminal domain"/>
    <property type="match status" value="1"/>
</dbReference>
<dbReference type="Gene3D" id="3.30.450.20">
    <property type="entry name" value="PAS domain"/>
    <property type="match status" value="1"/>
</dbReference>
<dbReference type="InterPro" id="IPR036890">
    <property type="entry name" value="HATPase_C_sf"/>
</dbReference>
<dbReference type="InterPro" id="IPR005467">
    <property type="entry name" value="His_kinase_dom"/>
</dbReference>
<dbReference type="InterPro" id="IPR003661">
    <property type="entry name" value="HisK_dim/P_dom"/>
</dbReference>
<dbReference type="InterPro" id="IPR036097">
    <property type="entry name" value="HisK_dim/P_sf"/>
</dbReference>
<dbReference type="InterPro" id="IPR000014">
    <property type="entry name" value="PAS"/>
</dbReference>
<dbReference type="InterPro" id="IPR035965">
    <property type="entry name" value="PAS-like_dom_sf"/>
</dbReference>
<dbReference type="InterPro" id="IPR013767">
    <property type="entry name" value="PAS_fold"/>
</dbReference>
<dbReference type="InterPro" id="IPR048231">
    <property type="entry name" value="PdhS_histid_kinase"/>
</dbReference>
<dbReference type="InterPro" id="IPR004358">
    <property type="entry name" value="Sig_transdc_His_kin-like_C"/>
</dbReference>
<dbReference type="NCBIfam" id="NF041593">
    <property type="entry name" value="histid_kinase_PdhS"/>
    <property type="match status" value="1"/>
</dbReference>
<dbReference type="NCBIfam" id="TIGR00229">
    <property type="entry name" value="sensory_box"/>
    <property type="match status" value="1"/>
</dbReference>
<dbReference type="PANTHER" id="PTHR43047:SF72">
    <property type="entry name" value="OSMOSENSING HISTIDINE PROTEIN KINASE SLN1"/>
    <property type="match status" value="1"/>
</dbReference>
<dbReference type="PANTHER" id="PTHR43047">
    <property type="entry name" value="TWO-COMPONENT HISTIDINE PROTEIN KINASE"/>
    <property type="match status" value="1"/>
</dbReference>
<dbReference type="Pfam" id="PF02518">
    <property type="entry name" value="HATPase_c"/>
    <property type="match status" value="1"/>
</dbReference>
<dbReference type="Pfam" id="PF00512">
    <property type="entry name" value="HisKA"/>
    <property type="match status" value="1"/>
</dbReference>
<dbReference type="Pfam" id="PF00989">
    <property type="entry name" value="PAS"/>
    <property type="match status" value="1"/>
</dbReference>
<dbReference type="Pfam" id="PF13188">
    <property type="entry name" value="PAS_8"/>
    <property type="match status" value="1"/>
</dbReference>
<dbReference type="PRINTS" id="PR00344">
    <property type="entry name" value="BCTRLSENSOR"/>
</dbReference>
<dbReference type="SMART" id="SM00387">
    <property type="entry name" value="HATPase_c"/>
    <property type="match status" value="1"/>
</dbReference>
<dbReference type="SMART" id="SM00388">
    <property type="entry name" value="HisKA"/>
    <property type="match status" value="1"/>
</dbReference>
<dbReference type="SMART" id="SM00091">
    <property type="entry name" value="PAS"/>
    <property type="match status" value="2"/>
</dbReference>
<dbReference type="SUPFAM" id="SSF55874">
    <property type="entry name" value="ATPase domain of HSP90 chaperone/DNA topoisomerase II/histidine kinase"/>
    <property type="match status" value="1"/>
</dbReference>
<dbReference type="SUPFAM" id="SSF47384">
    <property type="entry name" value="Homodimeric domain of signal transducing histidine kinase"/>
    <property type="match status" value="1"/>
</dbReference>
<dbReference type="SUPFAM" id="SSF55785">
    <property type="entry name" value="PYP-like sensor domain (PAS domain)"/>
    <property type="match status" value="1"/>
</dbReference>
<dbReference type="PROSITE" id="PS50109">
    <property type="entry name" value="HIS_KIN"/>
    <property type="match status" value="1"/>
</dbReference>
<dbReference type="PROSITE" id="PS50112">
    <property type="entry name" value="PAS"/>
    <property type="match status" value="1"/>
</dbReference>
<keyword id="KW-0067">ATP-binding</keyword>
<keyword id="KW-0131">Cell cycle</keyword>
<keyword id="KW-0132">Cell division</keyword>
<keyword id="KW-0963">Cytoplasm</keyword>
<keyword id="KW-0418">Kinase</keyword>
<keyword id="KW-0547">Nucleotide-binding</keyword>
<keyword id="KW-0597">Phosphoprotein</keyword>
<keyword id="KW-1185">Reference proteome</keyword>
<keyword id="KW-0808">Transferase</keyword>
<name>PDHS_BRUA2</name>